<sequence length="218" mass="23058">MTQDEMKKAAGWAALKYVEKGSIVGVGTGSTVNHFIDALGTIKDEIKGAVSSSIASTAKLEALGIRVYDCNDVSELDIYVDGADEINPERDMIKGGGAALTREKIVAAIAKKFVCIVDGTKAVDVLGNFPLPVEVIPMARSYVARELVKLGGDPVYREGVITDNGNVILDVYNMKITHPKDLESKINGIAGVVTVGLFAHRGADVVITGTPQGAKIEE</sequence>
<organism>
    <name type="scientific">Vibrio cholerae serotype O1 (strain M66-2)</name>
    <dbReference type="NCBI Taxonomy" id="579112"/>
    <lineage>
        <taxon>Bacteria</taxon>
        <taxon>Pseudomonadati</taxon>
        <taxon>Pseudomonadota</taxon>
        <taxon>Gammaproteobacteria</taxon>
        <taxon>Vibrionales</taxon>
        <taxon>Vibrionaceae</taxon>
        <taxon>Vibrio</taxon>
    </lineage>
</organism>
<proteinExistence type="inferred from homology"/>
<protein>
    <recommendedName>
        <fullName evidence="1">Ribose-5-phosphate isomerase A</fullName>
        <ecNumber evidence="1">5.3.1.6</ecNumber>
    </recommendedName>
    <alternativeName>
        <fullName evidence="1">Phosphoriboisomerase A</fullName>
        <shortName evidence="1">PRI</shortName>
    </alternativeName>
</protein>
<feature type="chain" id="PRO_1000194732" description="Ribose-5-phosphate isomerase A">
    <location>
        <begin position="1"/>
        <end position="218"/>
    </location>
</feature>
<feature type="active site" description="Proton acceptor" evidence="1">
    <location>
        <position position="103"/>
    </location>
</feature>
<feature type="binding site" evidence="1">
    <location>
        <begin position="28"/>
        <end position="31"/>
    </location>
    <ligand>
        <name>substrate</name>
    </ligand>
</feature>
<feature type="binding site" evidence="1">
    <location>
        <begin position="81"/>
        <end position="84"/>
    </location>
    <ligand>
        <name>substrate</name>
    </ligand>
</feature>
<feature type="binding site" evidence="1">
    <location>
        <begin position="94"/>
        <end position="97"/>
    </location>
    <ligand>
        <name>substrate</name>
    </ligand>
</feature>
<feature type="binding site" evidence="1">
    <location>
        <position position="121"/>
    </location>
    <ligand>
        <name>substrate</name>
    </ligand>
</feature>
<reference key="1">
    <citation type="journal article" date="2008" name="PLoS ONE">
        <title>A recalibrated molecular clock and independent origins for the cholera pandemic clones.</title>
        <authorList>
            <person name="Feng L."/>
            <person name="Reeves P.R."/>
            <person name="Lan R."/>
            <person name="Ren Y."/>
            <person name="Gao C."/>
            <person name="Zhou Z."/>
            <person name="Ren Y."/>
            <person name="Cheng J."/>
            <person name="Wang W."/>
            <person name="Wang J."/>
            <person name="Qian W."/>
            <person name="Li D."/>
            <person name="Wang L."/>
        </authorList>
    </citation>
    <scope>NUCLEOTIDE SEQUENCE [LARGE SCALE GENOMIC DNA]</scope>
    <source>
        <strain>M66-2</strain>
    </source>
</reference>
<comment type="function">
    <text evidence="1">Catalyzes the reversible conversion of ribose-5-phosphate to ribulose 5-phosphate.</text>
</comment>
<comment type="catalytic activity">
    <reaction evidence="1">
        <text>aldehydo-D-ribose 5-phosphate = D-ribulose 5-phosphate</text>
        <dbReference type="Rhea" id="RHEA:14657"/>
        <dbReference type="ChEBI" id="CHEBI:58121"/>
        <dbReference type="ChEBI" id="CHEBI:58273"/>
        <dbReference type="EC" id="5.3.1.6"/>
    </reaction>
</comment>
<comment type="pathway">
    <text evidence="1">Carbohydrate degradation; pentose phosphate pathway; D-ribose 5-phosphate from D-ribulose 5-phosphate (non-oxidative stage): step 1/1.</text>
</comment>
<comment type="subunit">
    <text evidence="1">Homodimer.</text>
</comment>
<comment type="similarity">
    <text evidence="1">Belongs to the ribose 5-phosphate isomerase family.</text>
</comment>
<accession>C3LR22</accession>
<keyword id="KW-0413">Isomerase</keyword>
<name>RPIA_VIBCM</name>
<dbReference type="EC" id="5.3.1.6" evidence="1"/>
<dbReference type="EMBL" id="CP001233">
    <property type="protein sequence ID" value="ACP06700.1"/>
    <property type="molecule type" value="Genomic_DNA"/>
</dbReference>
<dbReference type="RefSeq" id="WP_000189749.1">
    <property type="nucleotide sequence ID" value="NC_012578.1"/>
</dbReference>
<dbReference type="SMR" id="C3LR22"/>
<dbReference type="GeneID" id="88783289"/>
<dbReference type="KEGG" id="vcm:VCM66_2402"/>
<dbReference type="HOGENOM" id="CLU_056590_1_1_6"/>
<dbReference type="UniPathway" id="UPA00115">
    <property type="reaction ID" value="UER00412"/>
</dbReference>
<dbReference type="Proteomes" id="UP000001217">
    <property type="component" value="Chromosome I"/>
</dbReference>
<dbReference type="GO" id="GO:0005829">
    <property type="term" value="C:cytosol"/>
    <property type="evidence" value="ECO:0007669"/>
    <property type="project" value="TreeGrafter"/>
</dbReference>
<dbReference type="GO" id="GO:0004751">
    <property type="term" value="F:ribose-5-phosphate isomerase activity"/>
    <property type="evidence" value="ECO:0007669"/>
    <property type="project" value="UniProtKB-UniRule"/>
</dbReference>
<dbReference type="GO" id="GO:0006014">
    <property type="term" value="P:D-ribose metabolic process"/>
    <property type="evidence" value="ECO:0007669"/>
    <property type="project" value="TreeGrafter"/>
</dbReference>
<dbReference type="GO" id="GO:0009052">
    <property type="term" value="P:pentose-phosphate shunt, non-oxidative branch"/>
    <property type="evidence" value="ECO:0007669"/>
    <property type="project" value="UniProtKB-UniRule"/>
</dbReference>
<dbReference type="CDD" id="cd01398">
    <property type="entry name" value="RPI_A"/>
    <property type="match status" value="1"/>
</dbReference>
<dbReference type="FunFam" id="3.30.70.260:FF:000004">
    <property type="entry name" value="Ribose-5-phosphate isomerase A"/>
    <property type="match status" value="1"/>
</dbReference>
<dbReference type="FunFam" id="3.40.50.1360:FF:000001">
    <property type="entry name" value="Ribose-5-phosphate isomerase A"/>
    <property type="match status" value="1"/>
</dbReference>
<dbReference type="Gene3D" id="3.30.70.260">
    <property type="match status" value="1"/>
</dbReference>
<dbReference type="Gene3D" id="3.40.50.1360">
    <property type="match status" value="1"/>
</dbReference>
<dbReference type="HAMAP" id="MF_00170">
    <property type="entry name" value="Rib_5P_isom_A"/>
    <property type="match status" value="1"/>
</dbReference>
<dbReference type="InterPro" id="IPR037171">
    <property type="entry name" value="NagB/RpiA_transferase-like"/>
</dbReference>
<dbReference type="InterPro" id="IPR020672">
    <property type="entry name" value="Ribose5P_isomerase_typA_subgr"/>
</dbReference>
<dbReference type="InterPro" id="IPR004788">
    <property type="entry name" value="Ribose5P_isomerase_type_A"/>
</dbReference>
<dbReference type="NCBIfam" id="NF001924">
    <property type="entry name" value="PRK00702.1"/>
    <property type="match status" value="1"/>
</dbReference>
<dbReference type="NCBIfam" id="TIGR00021">
    <property type="entry name" value="rpiA"/>
    <property type="match status" value="1"/>
</dbReference>
<dbReference type="PANTHER" id="PTHR11934">
    <property type="entry name" value="RIBOSE-5-PHOSPHATE ISOMERASE"/>
    <property type="match status" value="1"/>
</dbReference>
<dbReference type="PANTHER" id="PTHR11934:SF0">
    <property type="entry name" value="RIBOSE-5-PHOSPHATE ISOMERASE"/>
    <property type="match status" value="1"/>
</dbReference>
<dbReference type="Pfam" id="PF06026">
    <property type="entry name" value="Rib_5-P_isom_A"/>
    <property type="match status" value="1"/>
</dbReference>
<dbReference type="SUPFAM" id="SSF75445">
    <property type="entry name" value="D-ribose-5-phosphate isomerase (RpiA), lid domain"/>
    <property type="match status" value="1"/>
</dbReference>
<dbReference type="SUPFAM" id="SSF100950">
    <property type="entry name" value="NagB/RpiA/CoA transferase-like"/>
    <property type="match status" value="1"/>
</dbReference>
<evidence type="ECO:0000255" key="1">
    <source>
        <dbReference type="HAMAP-Rule" id="MF_00170"/>
    </source>
</evidence>
<gene>
    <name evidence="1" type="primary">rpiA</name>
    <name type="ordered locus">VCM66_2402</name>
</gene>